<evidence type="ECO:0000255" key="1">
    <source>
        <dbReference type="HAMAP-Rule" id="MF_00120"/>
    </source>
</evidence>
<reference key="1">
    <citation type="journal article" date="2008" name="DNA Res.">
        <title>Comparative genome analysis of Lactobacillus reuteri and Lactobacillus fermentum reveal a genomic island for reuterin and cobalamin production.</title>
        <authorList>
            <person name="Morita H."/>
            <person name="Toh H."/>
            <person name="Fukuda S."/>
            <person name="Horikawa H."/>
            <person name="Oshima K."/>
            <person name="Suzuki T."/>
            <person name="Murakami M."/>
            <person name="Hisamatsu S."/>
            <person name="Kato Y."/>
            <person name="Takizawa T."/>
            <person name="Fukuoka H."/>
            <person name="Yoshimura T."/>
            <person name="Itoh K."/>
            <person name="O'Sullivan D.J."/>
            <person name="McKay L.L."/>
            <person name="Ohno H."/>
            <person name="Kikuchi J."/>
            <person name="Masaoka T."/>
            <person name="Hattori M."/>
        </authorList>
    </citation>
    <scope>NUCLEOTIDE SEQUENCE [LARGE SCALE GENOMIC DNA]</scope>
    <source>
        <strain>JCM 1112</strain>
    </source>
</reference>
<gene>
    <name evidence="1" type="primary">gatA</name>
    <name type="ordered locus">LAR_1352</name>
</gene>
<name>GATA_LIMRJ</name>
<dbReference type="EC" id="6.3.5.7" evidence="1"/>
<dbReference type="EMBL" id="AP007281">
    <property type="protein sequence ID" value="BAG25868.1"/>
    <property type="molecule type" value="Genomic_DNA"/>
</dbReference>
<dbReference type="RefSeq" id="WP_003668756.1">
    <property type="nucleotide sequence ID" value="NC_010609.1"/>
</dbReference>
<dbReference type="SMR" id="B2G8T6"/>
<dbReference type="KEGG" id="lrf:LAR_1352"/>
<dbReference type="HOGENOM" id="CLU_009600_0_3_9"/>
<dbReference type="GO" id="GO:0030956">
    <property type="term" value="C:glutamyl-tRNA(Gln) amidotransferase complex"/>
    <property type="evidence" value="ECO:0007669"/>
    <property type="project" value="InterPro"/>
</dbReference>
<dbReference type="GO" id="GO:0005524">
    <property type="term" value="F:ATP binding"/>
    <property type="evidence" value="ECO:0007669"/>
    <property type="project" value="UniProtKB-KW"/>
</dbReference>
<dbReference type="GO" id="GO:0050567">
    <property type="term" value="F:glutaminyl-tRNA synthase (glutamine-hydrolyzing) activity"/>
    <property type="evidence" value="ECO:0007669"/>
    <property type="project" value="UniProtKB-UniRule"/>
</dbReference>
<dbReference type="GO" id="GO:0006412">
    <property type="term" value="P:translation"/>
    <property type="evidence" value="ECO:0007669"/>
    <property type="project" value="UniProtKB-UniRule"/>
</dbReference>
<dbReference type="Gene3D" id="3.90.1300.10">
    <property type="entry name" value="Amidase signature (AS) domain"/>
    <property type="match status" value="1"/>
</dbReference>
<dbReference type="HAMAP" id="MF_00120">
    <property type="entry name" value="GatA"/>
    <property type="match status" value="1"/>
</dbReference>
<dbReference type="InterPro" id="IPR000120">
    <property type="entry name" value="Amidase"/>
</dbReference>
<dbReference type="InterPro" id="IPR020556">
    <property type="entry name" value="Amidase_CS"/>
</dbReference>
<dbReference type="InterPro" id="IPR023631">
    <property type="entry name" value="Amidase_dom"/>
</dbReference>
<dbReference type="InterPro" id="IPR036928">
    <property type="entry name" value="AS_sf"/>
</dbReference>
<dbReference type="InterPro" id="IPR004412">
    <property type="entry name" value="GatA"/>
</dbReference>
<dbReference type="NCBIfam" id="TIGR00132">
    <property type="entry name" value="gatA"/>
    <property type="match status" value="1"/>
</dbReference>
<dbReference type="PANTHER" id="PTHR11895:SF151">
    <property type="entry name" value="GLUTAMYL-TRNA(GLN) AMIDOTRANSFERASE SUBUNIT A"/>
    <property type="match status" value="1"/>
</dbReference>
<dbReference type="PANTHER" id="PTHR11895">
    <property type="entry name" value="TRANSAMIDASE"/>
    <property type="match status" value="1"/>
</dbReference>
<dbReference type="Pfam" id="PF01425">
    <property type="entry name" value="Amidase"/>
    <property type="match status" value="1"/>
</dbReference>
<dbReference type="SUPFAM" id="SSF75304">
    <property type="entry name" value="Amidase signature (AS) enzymes"/>
    <property type="match status" value="1"/>
</dbReference>
<dbReference type="PROSITE" id="PS00571">
    <property type="entry name" value="AMIDASES"/>
    <property type="match status" value="1"/>
</dbReference>
<keyword id="KW-0067">ATP-binding</keyword>
<keyword id="KW-0436">Ligase</keyword>
<keyword id="KW-0547">Nucleotide-binding</keyword>
<keyword id="KW-0648">Protein biosynthesis</keyword>
<protein>
    <recommendedName>
        <fullName evidence="1">Glutamyl-tRNA(Gln) amidotransferase subunit A</fullName>
        <shortName evidence="1">Glu-ADT subunit A</shortName>
        <ecNumber evidence="1">6.3.5.7</ecNumber>
    </recommendedName>
</protein>
<accession>B2G8T6</accession>
<feature type="chain" id="PRO_1000095143" description="Glutamyl-tRNA(Gln) amidotransferase subunit A">
    <location>
        <begin position="1"/>
        <end position="490"/>
    </location>
</feature>
<feature type="active site" description="Charge relay system" evidence="1">
    <location>
        <position position="77"/>
    </location>
</feature>
<feature type="active site" description="Charge relay system" evidence="1">
    <location>
        <position position="152"/>
    </location>
</feature>
<feature type="active site" description="Acyl-ester intermediate" evidence="1">
    <location>
        <position position="176"/>
    </location>
</feature>
<sequence length="490" mass="53010">MDFYQTSLSQLHDDLVNKKISATELTKETFDHIKGNEDQVKAFISLNEDQALKRAAEIDAKGISADQLTAGVPLAVKDNILTKGLTTTAASKMLENFNPVYDATVVEKLNAADYINVGKTNLDEFAMGSSTENSAFFTTHNPWDLTRVPGGSSGGSAAAVAAGDVLGALGTDTGGSIRMPASFNGVVGMKPTYGRVSRWGIIAFGSSFDQVGWLTQNVKDNALLTALISGNDERDMTSSLKEVPDWAAQLNENTNVKGLRIAVPKEYFDGLDEDVQEVIKAALDHLESLGAIVDEVSLPHTKYGVPAYYILASSEASSNLQRYDGIRYGFRAADVKNLEDVYVRSRSEGFGEEVKRRIMLGTFSLSAGFYDAYFNKAAKVRRLIAQDFEDVFKDHDVIVGATGASTAFKIGAEIDDPQTMYMNDVLTVPVNMAGLPAMSIPAGFSAKNGMPVGLQIIGKAFDEQTVYNTGYVFEQTTDFHKKTPKLGGQN</sequence>
<organism>
    <name type="scientific">Limosilactobacillus reuteri subsp. reuteri (strain JCM 1112)</name>
    <name type="common">Lactobacillus reuteri</name>
    <dbReference type="NCBI Taxonomy" id="557433"/>
    <lineage>
        <taxon>Bacteria</taxon>
        <taxon>Bacillati</taxon>
        <taxon>Bacillota</taxon>
        <taxon>Bacilli</taxon>
        <taxon>Lactobacillales</taxon>
        <taxon>Lactobacillaceae</taxon>
        <taxon>Limosilactobacillus</taxon>
    </lineage>
</organism>
<proteinExistence type="inferred from homology"/>
<comment type="function">
    <text evidence="1">Allows the formation of correctly charged Gln-tRNA(Gln) through the transamidation of misacylated Glu-tRNA(Gln) in organisms which lack glutaminyl-tRNA synthetase. The reaction takes place in the presence of glutamine and ATP through an activated gamma-phospho-Glu-tRNA(Gln).</text>
</comment>
<comment type="catalytic activity">
    <reaction evidence="1">
        <text>L-glutamyl-tRNA(Gln) + L-glutamine + ATP + H2O = L-glutaminyl-tRNA(Gln) + L-glutamate + ADP + phosphate + H(+)</text>
        <dbReference type="Rhea" id="RHEA:17521"/>
        <dbReference type="Rhea" id="RHEA-COMP:9681"/>
        <dbReference type="Rhea" id="RHEA-COMP:9684"/>
        <dbReference type="ChEBI" id="CHEBI:15377"/>
        <dbReference type="ChEBI" id="CHEBI:15378"/>
        <dbReference type="ChEBI" id="CHEBI:29985"/>
        <dbReference type="ChEBI" id="CHEBI:30616"/>
        <dbReference type="ChEBI" id="CHEBI:43474"/>
        <dbReference type="ChEBI" id="CHEBI:58359"/>
        <dbReference type="ChEBI" id="CHEBI:78520"/>
        <dbReference type="ChEBI" id="CHEBI:78521"/>
        <dbReference type="ChEBI" id="CHEBI:456216"/>
        <dbReference type="EC" id="6.3.5.7"/>
    </reaction>
</comment>
<comment type="subunit">
    <text evidence="1">Heterotrimer of A, B and C subunits.</text>
</comment>
<comment type="similarity">
    <text evidence="1">Belongs to the amidase family. GatA subfamily.</text>
</comment>